<gene>
    <name evidence="5" type="primary">ced1</name>
</gene>
<dbReference type="EC" id="3.2.1.4" evidence="4"/>
<dbReference type="EMBL" id="X55732">
    <property type="protein sequence ID" value="CAA39264.1"/>
    <property type="molecule type" value="Genomic_DNA"/>
</dbReference>
<dbReference type="PIR" id="S12025">
    <property type="entry name" value="S12025"/>
</dbReference>
<dbReference type="SMR" id="P23658"/>
<dbReference type="CAZy" id="GH9">
    <property type="family name" value="Glycoside Hydrolase Family 9"/>
</dbReference>
<dbReference type="GO" id="GO:0005576">
    <property type="term" value="C:extracellular region"/>
    <property type="evidence" value="ECO:0007669"/>
    <property type="project" value="UniProtKB-SubCell"/>
</dbReference>
<dbReference type="GO" id="GO:0008810">
    <property type="term" value="F:cellulase activity"/>
    <property type="evidence" value="ECO:0007669"/>
    <property type="project" value="UniProtKB-EC"/>
</dbReference>
<dbReference type="GO" id="GO:0030245">
    <property type="term" value="P:cellulose catabolic process"/>
    <property type="evidence" value="ECO:0007669"/>
    <property type="project" value="UniProtKB-KW"/>
</dbReference>
<dbReference type="CDD" id="cd02850">
    <property type="entry name" value="E_set_Cellulase_N"/>
    <property type="match status" value="1"/>
</dbReference>
<dbReference type="Gene3D" id="1.50.10.10">
    <property type="match status" value="1"/>
</dbReference>
<dbReference type="Gene3D" id="2.60.40.10">
    <property type="entry name" value="Immunoglobulins"/>
    <property type="match status" value="1"/>
</dbReference>
<dbReference type="InterPro" id="IPR008928">
    <property type="entry name" value="6-hairpin_glycosidase_sf"/>
</dbReference>
<dbReference type="InterPro" id="IPR012341">
    <property type="entry name" value="6hp_glycosidase-like_sf"/>
</dbReference>
<dbReference type="InterPro" id="IPR004197">
    <property type="entry name" value="Cellulase_Ig-like"/>
</dbReference>
<dbReference type="InterPro" id="IPR001701">
    <property type="entry name" value="Glyco_hydro_9"/>
</dbReference>
<dbReference type="InterPro" id="IPR033126">
    <property type="entry name" value="Glyco_hydro_9_Asp/Glu_AS"/>
</dbReference>
<dbReference type="InterPro" id="IPR018221">
    <property type="entry name" value="Glyco_hydro_9_His_AS"/>
</dbReference>
<dbReference type="InterPro" id="IPR013783">
    <property type="entry name" value="Ig-like_fold"/>
</dbReference>
<dbReference type="InterPro" id="IPR014756">
    <property type="entry name" value="Ig_E-set"/>
</dbReference>
<dbReference type="PANTHER" id="PTHR22298">
    <property type="entry name" value="ENDO-1,4-BETA-GLUCANASE"/>
    <property type="match status" value="1"/>
</dbReference>
<dbReference type="Pfam" id="PF02927">
    <property type="entry name" value="CelD_N"/>
    <property type="match status" value="1"/>
</dbReference>
<dbReference type="Pfam" id="PF00759">
    <property type="entry name" value="Glyco_hydro_9"/>
    <property type="match status" value="1"/>
</dbReference>
<dbReference type="SUPFAM" id="SSF81296">
    <property type="entry name" value="E set domains"/>
    <property type="match status" value="1"/>
</dbReference>
<dbReference type="SUPFAM" id="SSF48208">
    <property type="entry name" value="Six-hairpin glycosidases"/>
    <property type="match status" value="1"/>
</dbReference>
<dbReference type="PROSITE" id="PS60032">
    <property type="entry name" value="GH9_1"/>
    <property type="match status" value="1"/>
</dbReference>
<dbReference type="PROSITE" id="PS00592">
    <property type="entry name" value="GH9_2"/>
    <property type="match status" value="1"/>
</dbReference>
<dbReference type="PROSITE" id="PS00698">
    <property type="entry name" value="GH9_3"/>
    <property type="match status" value="1"/>
</dbReference>
<name>GUNC_BUTFI</name>
<keyword id="KW-0119">Carbohydrate metabolism</keyword>
<keyword id="KW-0136">Cellulose degradation</keyword>
<keyword id="KW-0326">Glycosidase</keyword>
<keyword id="KW-0378">Hydrolase</keyword>
<keyword id="KW-0624">Polysaccharide degradation</keyword>
<keyword id="KW-0964">Secreted</keyword>
<feature type="chain" id="PRO_0000184058" description="Cellodextrinase">
    <location>
        <begin position="1"/>
        <end position="547"/>
    </location>
</feature>
<feature type="active site" description="Nucleophile" evidence="3">
    <location>
        <position position="148"/>
    </location>
</feature>
<feature type="active site" evidence="1">
    <location>
        <position position="474"/>
    </location>
</feature>
<feature type="active site" evidence="2">
    <location>
        <position position="520"/>
    </location>
</feature>
<feature type="active site" evidence="2">
    <location>
        <position position="529"/>
    </location>
</feature>
<protein>
    <recommendedName>
        <fullName evidence="5">Cellodextrinase</fullName>
        <ecNumber evidence="4">3.2.1.4</ecNumber>
    </recommendedName>
</protein>
<evidence type="ECO:0000255" key="1">
    <source>
        <dbReference type="PROSITE-ProRule" id="PRU10059"/>
    </source>
</evidence>
<evidence type="ECO:0000255" key="2">
    <source>
        <dbReference type="PROSITE-ProRule" id="PRU10060"/>
    </source>
</evidence>
<evidence type="ECO:0000255" key="3">
    <source>
        <dbReference type="PROSITE-ProRule" id="PRU10140"/>
    </source>
</evidence>
<evidence type="ECO:0000269" key="4">
    <source>
    </source>
</evidence>
<evidence type="ECO:0000303" key="5">
    <source>
    </source>
</evidence>
<evidence type="ECO:0000305" key="6"/>
<evidence type="ECO:0000305" key="7">
    <source>
    </source>
</evidence>
<reference key="1">
    <citation type="journal article" date="1990" name="Mol. Gen. Genet.">
        <title>Sequencing and expression of a cellodextrinase (ced1) gene from Butyrivibrio fibrisolvens H17c cloned in Escherichia coli.</title>
        <authorList>
            <person name="Berger E."/>
            <person name="Jones W.A."/>
            <person name="Jones D.T."/>
            <person name="Woods D.R."/>
        </authorList>
    </citation>
    <scope>NUCLEOTIDE SEQUENCE [GENOMIC DNA]</scope>
    <scope>FUNCTION</scope>
    <scope>CATALYTIC ACTIVITY</scope>
    <scope>SUBSTRATE SPECIFICITY</scope>
    <scope>ACTIVITY REGULATION</scope>
    <scope>SUBCELLULAR LOCATION</scope>
    <source>
        <strain>H17C</strain>
    </source>
</reference>
<accession>P23658</accession>
<proteinExistence type="evidence at protein level"/>
<comment type="function">
    <text evidence="4">Glycoside hydrolase that rapidly hydrolyzes short-chain cellodextrins to yield either cellobiose or cellobiose and glucose as end products; cellobiose is not hydrolyzed further. Also shows limited activity against endoglucanase specific substrates (carboxymethylcellulose (CMC), lichenan, laminarin and xylan).</text>
</comment>
<comment type="catalytic activity">
    <reaction evidence="4">
        <text>Endohydrolysis of (1-&gt;4)-beta-D-glucosidic linkages in cellulose, lichenin and cereal beta-D-glucans.</text>
        <dbReference type="EC" id="3.2.1.4"/>
    </reaction>
</comment>
<comment type="activity regulation">
    <text evidence="4">Is not inhibited by methylcellulose.</text>
</comment>
<comment type="subcellular location">
    <subcellularLocation>
        <location evidence="7">Secreted</location>
    </subcellularLocation>
</comment>
<comment type="similarity">
    <text evidence="3 6">Belongs to the glycosyl hydrolase 9 (cellulase E) family.</text>
</comment>
<organism>
    <name type="scientific">Butyrivibrio fibrisolvens</name>
    <dbReference type="NCBI Taxonomy" id="831"/>
    <lineage>
        <taxon>Bacteria</taxon>
        <taxon>Bacillati</taxon>
        <taxon>Bacillota</taxon>
        <taxon>Clostridia</taxon>
        <taxon>Lachnospirales</taxon>
        <taxon>Lachnospiraceae</taxon>
        <taxon>Butyrivibrio</taxon>
    </lineage>
</organism>
<sequence>MKKVLVNQVGFLCNAPKKAVLNFQANEFSVVDGNGKKAFDGKVEHFGTDEISGEDTYVADFSALTEEGKYKIVADGQESVLFSISNDAYDKLMKDICKCFYYLRCGDALSKEFAGEYYHKPCHMTKATVYGEDVEPVDVTGGWHDAGDYGRYSTAGAVAVAHLLYGVRFFKGLLDVHYDIPKVAGDKGNLPEILAEVKVELDFLMKMQRENGSVWHKVTTFNHAPFLMPEDDREELFLFSVSSLATADIAAVFALAYTVYKEYDAEYADKLMQKSLLAYKWLLDNPDELLFFNPDGSNTGQYDEAEDISNRFWAACALYEATSDGKYYSDAQELKNRLEEFDKNAQKKGYQGNVFTCLGWAEVAGLGSLSLLLKREENALCSLARNSFVAEADRLVKVSKENGFGLCMGENDFIWGSNMELLKYMMVLSTAIRIDNKPEYKLALEAGLDYILGCNSMDISYVTGNGEKAFKNPHLRPTAVDDIEEPWPGLVSGGPNSGLHDERAQTLRGKGLPPMKCYIDHIDCYSLNEITIYWNSPLVFALSGILE</sequence>